<dbReference type="EC" id="1.4.3.5" evidence="1"/>
<dbReference type="EMBL" id="BX640420">
    <property type="protein sequence ID" value="CAE43518.1"/>
    <property type="molecule type" value="Genomic_DNA"/>
</dbReference>
<dbReference type="RefSeq" id="NP_881799.1">
    <property type="nucleotide sequence ID" value="NC_002929.2"/>
</dbReference>
<dbReference type="RefSeq" id="WP_003814302.1">
    <property type="nucleotide sequence ID" value="NZ_CP039022.1"/>
</dbReference>
<dbReference type="SMR" id="Q7VU72"/>
<dbReference type="STRING" id="257313.BP3251"/>
<dbReference type="PaxDb" id="257313-BP3251"/>
<dbReference type="GeneID" id="93205395"/>
<dbReference type="KEGG" id="bpe:BP3251"/>
<dbReference type="PATRIC" id="fig|257313.5.peg.3516"/>
<dbReference type="eggNOG" id="COG0259">
    <property type="taxonomic scope" value="Bacteria"/>
</dbReference>
<dbReference type="HOGENOM" id="CLU_032263_2_2_4"/>
<dbReference type="UniPathway" id="UPA01068">
    <property type="reaction ID" value="UER00304"/>
</dbReference>
<dbReference type="UniPathway" id="UPA01068">
    <property type="reaction ID" value="UER00305"/>
</dbReference>
<dbReference type="Proteomes" id="UP000002676">
    <property type="component" value="Chromosome"/>
</dbReference>
<dbReference type="GO" id="GO:0010181">
    <property type="term" value="F:FMN binding"/>
    <property type="evidence" value="ECO:0007669"/>
    <property type="project" value="UniProtKB-UniRule"/>
</dbReference>
<dbReference type="GO" id="GO:0004733">
    <property type="term" value="F:pyridoxamine phosphate oxidase activity"/>
    <property type="evidence" value="ECO:0007669"/>
    <property type="project" value="UniProtKB-UniRule"/>
</dbReference>
<dbReference type="GO" id="GO:0008615">
    <property type="term" value="P:pyridoxine biosynthetic process"/>
    <property type="evidence" value="ECO:0007669"/>
    <property type="project" value="UniProtKB-KW"/>
</dbReference>
<dbReference type="FunFam" id="2.30.110.10:FF:000005">
    <property type="entry name" value="NAD(P)H-hydrate epimerase"/>
    <property type="match status" value="1"/>
</dbReference>
<dbReference type="Gene3D" id="2.30.110.10">
    <property type="entry name" value="Electron Transport, Fmn-binding Protein, Chain A"/>
    <property type="match status" value="1"/>
</dbReference>
<dbReference type="HAMAP" id="MF_01629">
    <property type="entry name" value="PdxH"/>
    <property type="match status" value="1"/>
</dbReference>
<dbReference type="InterPro" id="IPR000659">
    <property type="entry name" value="Pyridox_Oxase"/>
</dbReference>
<dbReference type="InterPro" id="IPR019740">
    <property type="entry name" value="Pyridox_Oxase_CS"/>
</dbReference>
<dbReference type="InterPro" id="IPR011576">
    <property type="entry name" value="Pyridox_Oxase_N"/>
</dbReference>
<dbReference type="InterPro" id="IPR019576">
    <property type="entry name" value="Pyridoxamine_oxidase_dimer_C"/>
</dbReference>
<dbReference type="InterPro" id="IPR012349">
    <property type="entry name" value="Split_barrel_FMN-bd"/>
</dbReference>
<dbReference type="NCBIfam" id="TIGR00558">
    <property type="entry name" value="pdxH"/>
    <property type="match status" value="1"/>
</dbReference>
<dbReference type="NCBIfam" id="NF004231">
    <property type="entry name" value="PRK05679.1"/>
    <property type="match status" value="1"/>
</dbReference>
<dbReference type="PANTHER" id="PTHR10851:SF0">
    <property type="entry name" value="PYRIDOXINE-5'-PHOSPHATE OXIDASE"/>
    <property type="match status" value="1"/>
</dbReference>
<dbReference type="PANTHER" id="PTHR10851">
    <property type="entry name" value="PYRIDOXINE-5-PHOSPHATE OXIDASE"/>
    <property type="match status" value="1"/>
</dbReference>
<dbReference type="Pfam" id="PF10590">
    <property type="entry name" value="PNP_phzG_C"/>
    <property type="match status" value="1"/>
</dbReference>
<dbReference type="Pfam" id="PF01243">
    <property type="entry name" value="PNPOx_N"/>
    <property type="match status" value="1"/>
</dbReference>
<dbReference type="PIRSF" id="PIRSF000190">
    <property type="entry name" value="Pyd_amn-ph_oxd"/>
    <property type="match status" value="1"/>
</dbReference>
<dbReference type="SUPFAM" id="SSF50475">
    <property type="entry name" value="FMN-binding split barrel"/>
    <property type="match status" value="1"/>
</dbReference>
<dbReference type="PROSITE" id="PS01064">
    <property type="entry name" value="PYRIDOX_OXIDASE"/>
    <property type="match status" value="1"/>
</dbReference>
<sequence>MSVSDLRQSYEKGVLVEEQAAASPFQQFARWFDEAVAARVPEPNAMTLATVNAEGQPSARIVLIKGYDDAGFVFFTNYESRKGLDLDANPRASLLFFWQPLERQVRIEGVIEKVSAAESDEYFHSRPLGSRLGAWASRQSQPITRDELEAREREFRDRYGEHPPRPPHWGGYRLKPNRFEFWQGRPSRLHDRLRYEPDGKQGWTIDRLSP</sequence>
<gene>
    <name evidence="1" type="primary">pdxH</name>
    <name type="ordered locus">BP3251</name>
</gene>
<proteinExistence type="inferred from homology"/>
<protein>
    <recommendedName>
        <fullName evidence="1">Pyridoxine/pyridoxamine 5'-phosphate oxidase</fullName>
        <ecNumber evidence="1">1.4.3.5</ecNumber>
    </recommendedName>
    <alternativeName>
        <fullName evidence="1">PNP/PMP oxidase</fullName>
        <shortName evidence="1">PNPOx</shortName>
    </alternativeName>
    <alternativeName>
        <fullName evidence="1">Pyridoxal 5'-phosphate synthase</fullName>
    </alternativeName>
</protein>
<reference key="1">
    <citation type="journal article" date="2003" name="Nat. Genet.">
        <title>Comparative analysis of the genome sequences of Bordetella pertussis, Bordetella parapertussis and Bordetella bronchiseptica.</title>
        <authorList>
            <person name="Parkhill J."/>
            <person name="Sebaihia M."/>
            <person name="Preston A."/>
            <person name="Murphy L.D."/>
            <person name="Thomson N.R."/>
            <person name="Harris D.E."/>
            <person name="Holden M.T.G."/>
            <person name="Churcher C.M."/>
            <person name="Bentley S.D."/>
            <person name="Mungall K.L."/>
            <person name="Cerdeno-Tarraga A.-M."/>
            <person name="Temple L."/>
            <person name="James K.D."/>
            <person name="Harris B."/>
            <person name="Quail M.A."/>
            <person name="Achtman M."/>
            <person name="Atkin R."/>
            <person name="Baker S."/>
            <person name="Basham D."/>
            <person name="Bason N."/>
            <person name="Cherevach I."/>
            <person name="Chillingworth T."/>
            <person name="Collins M."/>
            <person name="Cronin A."/>
            <person name="Davis P."/>
            <person name="Doggett J."/>
            <person name="Feltwell T."/>
            <person name="Goble A."/>
            <person name="Hamlin N."/>
            <person name="Hauser H."/>
            <person name="Holroyd S."/>
            <person name="Jagels K."/>
            <person name="Leather S."/>
            <person name="Moule S."/>
            <person name="Norberczak H."/>
            <person name="O'Neil S."/>
            <person name="Ormond D."/>
            <person name="Price C."/>
            <person name="Rabbinowitsch E."/>
            <person name="Rutter S."/>
            <person name="Sanders M."/>
            <person name="Saunders D."/>
            <person name="Seeger K."/>
            <person name="Sharp S."/>
            <person name="Simmonds M."/>
            <person name="Skelton J."/>
            <person name="Squares R."/>
            <person name="Squares S."/>
            <person name="Stevens K."/>
            <person name="Unwin L."/>
            <person name="Whitehead S."/>
            <person name="Barrell B.G."/>
            <person name="Maskell D.J."/>
        </authorList>
    </citation>
    <scope>NUCLEOTIDE SEQUENCE [LARGE SCALE GENOMIC DNA]</scope>
    <source>
        <strain>Tohama I / ATCC BAA-589 / NCTC 13251</strain>
    </source>
</reference>
<evidence type="ECO:0000255" key="1">
    <source>
        <dbReference type="HAMAP-Rule" id="MF_01629"/>
    </source>
</evidence>
<keyword id="KW-0285">Flavoprotein</keyword>
<keyword id="KW-0288">FMN</keyword>
<keyword id="KW-0560">Oxidoreductase</keyword>
<keyword id="KW-0664">Pyridoxine biosynthesis</keyword>
<keyword id="KW-1185">Reference proteome</keyword>
<comment type="function">
    <text evidence="1">Catalyzes the oxidation of either pyridoxine 5'-phosphate (PNP) or pyridoxamine 5'-phosphate (PMP) into pyridoxal 5'-phosphate (PLP).</text>
</comment>
<comment type="catalytic activity">
    <reaction evidence="1">
        <text>pyridoxamine 5'-phosphate + O2 + H2O = pyridoxal 5'-phosphate + H2O2 + NH4(+)</text>
        <dbReference type="Rhea" id="RHEA:15817"/>
        <dbReference type="ChEBI" id="CHEBI:15377"/>
        <dbReference type="ChEBI" id="CHEBI:15379"/>
        <dbReference type="ChEBI" id="CHEBI:16240"/>
        <dbReference type="ChEBI" id="CHEBI:28938"/>
        <dbReference type="ChEBI" id="CHEBI:58451"/>
        <dbReference type="ChEBI" id="CHEBI:597326"/>
        <dbReference type="EC" id="1.4.3.5"/>
    </reaction>
</comment>
<comment type="catalytic activity">
    <reaction evidence="1">
        <text>pyridoxine 5'-phosphate + O2 = pyridoxal 5'-phosphate + H2O2</text>
        <dbReference type="Rhea" id="RHEA:15149"/>
        <dbReference type="ChEBI" id="CHEBI:15379"/>
        <dbReference type="ChEBI" id="CHEBI:16240"/>
        <dbReference type="ChEBI" id="CHEBI:58589"/>
        <dbReference type="ChEBI" id="CHEBI:597326"/>
        <dbReference type="EC" id="1.4.3.5"/>
    </reaction>
</comment>
<comment type="cofactor">
    <cofactor evidence="1">
        <name>FMN</name>
        <dbReference type="ChEBI" id="CHEBI:58210"/>
    </cofactor>
    <text evidence="1">Binds 1 FMN per subunit.</text>
</comment>
<comment type="pathway">
    <text evidence="1">Cofactor metabolism; pyridoxal 5'-phosphate salvage; pyridoxal 5'-phosphate from pyridoxamine 5'-phosphate: step 1/1.</text>
</comment>
<comment type="pathway">
    <text evidence="1">Cofactor metabolism; pyridoxal 5'-phosphate salvage; pyridoxal 5'-phosphate from pyridoxine 5'-phosphate: step 1/1.</text>
</comment>
<comment type="subunit">
    <text evidence="1">Homodimer.</text>
</comment>
<comment type="similarity">
    <text evidence="1">Belongs to the pyridoxamine 5'-phosphate oxidase family.</text>
</comment>
<accession>Q7VU72</accession>
<organism>
    <name type="scientific">Bordetella pertussis (strain Tohama I / ATCC BAA-589 / NCTC 13251)</name>
    <dbReference type="NCBI Taxonomy" id="257313"/>
    <lineage>
        <taxon>Bacteria</taxon>
        <taxon>Pseudomonadati</taxon>
        <taxon>Pseudomonadota</taxon>
        <taxon>Betaproteobacteria</taxon>
        <taxon>Burkholderiales</taxon>
        <taxon>Alcaligenaceae</taxon>
        <taxon>Bordetella</taxon>
    </lineage>
</organism>
<name>PDXH_BORPE</name>
<feature type="chain" id="PRO_0000167691" description="Pyridoxine/pyridoxamine 5'-phosphate oxidase">
    <location>
        <begin position="1"/>
        <end position="210"/>
    </location>
</feature>
<feature type="binding site" evidence="1">
    <location>
        <begin position="7"/>
        <end position="10"/>
    </location>
    <ligand>
        <name>substrate</name>
    </ligand>
</feature>
<feature type="binding site" evidence="1">
    <location>
        <begin position="60"/>
        <end position="65"/>
    </location>
    <ligand>
        <name>FMN</name>
        <dbReference type="ChEBI" id="CHEBI:58210"/>
    </ligand>
</feature>
<feature type="binding site" evidence="1">
    <location>
        <position position="65"/>
    </location>
    <ligand>
        <name>substrate</name>
    </ligand>
</feature>
<feature type="binding site" evidence="1">
    <location>
        <begin position="75"/>
        <end position="76"/>
    </location>
    <ligand>
        <name>FMN</name>
        <dbReference type="ChEBI" id="CHEBI:58210"/>
    </ligand>
</feature>
<feature type="binding site" evidence="1">
    <location>
        <position position="81"/>
    </location>
    <ligand>
        <name>FMN</name>
        <dbReference type="ChEBI" id="CHEBI:58210"/>
    </ligand>
</feature>
<feature type="binding site" evidence="1">
    <location>
        <position position="82"/>
    </location>
    <ligand>
        <name>FMN</name>
        <dbReference type="ChEBI" id="CHEBI:58210"/>
    </ligand>
</feature>
<feature type="binding site" evidence="1">
    <location>
        <position position="104"/>
    </location>
    <ligand>
        <name>FMN</name>
        <dbReference type="ChEBI" id="CHEBI:58210"/>
    </ligand>
</feature>
<feature type="binding site" evidence="1">
    <location>
        <position position="122"/>
    </location>
    <ligand>
        <name>substrate</name>
    </ligand>
</feature>
<feature type="binding site" evidence="1">
    <location>
        <position position="126"/>
    </location>
    <ligand>
        <name>substrate</name>
    </ligand>
</feature>
<feature type="binding site" evidence="1">
    <location>
        <position position="130"/>
    </location>
    <ligand>
        <name>substrate</name>
    </ligand>
</feature>
<feature type="binding site" evidence="1">
    <location>
        <begin position="139"/>
        <end position="140"/>
    </location>
    <ligand>
        <name>FMN</name>
        <dbReference type="ChEBI" id="CHEBI:58210"/>
    </ligand>
</feature>
<feature type="binding site" evidence="1">
    <location>
        <position position="182"/>
    </location>
    <ligand>
        <name>FMN</name>
        <dbReference type="ChEBI" id="CHEBI:58210"/>
    </ligand>
</feature>
<feature type="binding site" evidence="1">
    <location>
        <begin position="188"/>
        <end position="190"/>
    </location>
    <ligand>
        <name>substrate</name>
    </ligand>
</feature>
<feature type="binding site" evidence="1">
    <location>
        <position position="192"/>
    </location>
    <ligand>
        <name>FMN</name>
        <dbReference type="ChEBI" id="CHEBI:58210"/>
    </ligand>
</feature>